<name>MD15A_ARATH</name>
<evidence type="ECO:0000255" key="1"/>
<evidence type="ECO:0000256" key="2">
    <source>
        <dbReference type="SAM" id="MobiDB-lite"/>
    </source>
</evidence>
<evidence type="ECO:0000269" key="3">
    <source>
    </source>
</evidence>
<evidence type="ECO:0000305" key="4"/>
<protein>
    <recommendedName>
        <fullName>Mediator of RNA polymerase II transcription subunit 15a</fullName>
    </recommendedName>
</protein>
<gene>
    <name type="primary">MED15A</name>
    <name type="synonym">MED15_2</name>
    <name type="ordered locus">At1g15780</name>
    <name type="ORF">F7H2.12</name>
</gene>
<feature type="chain" id="PRO_0000418348" description="Mediator of RNA polymerase II transcription subunit 15a">
    <location>
        <begin position="1"/>
        <end position="1335"/>
    </location>
</feature>
<feature type="region of interest" description="Disordered" evidence="2">
    <location>
        <begin position="1"/>
        <end position="27"/>
    </location>
</feature>
<feature type="region of interest" description="Disordered" evidence="2">
    <location>
        <begin position="109"/>
        <end position="172"/>
    </location>
</feature>
<feature type="region of interest" description="Disordered" evidence="2">
    <location>
        <begin position="190"/>
        <end position="225"/>
    </location>
</feature>
<feature type="region of interest" description="Disordered" evidence="2">
    <location>
        <begin position="241"/>
        <end position="389"/>
    </location>
</feature>
<feature type="region of interest" description="Disordered" evidence="2">
    <location>
        <begin position="401"/>
        <end position="448"/>
    </location>
</feature>
<feature type="region of interest" description="Disordered" evidence="2">
    <location>
        <begin position="496"/>
        <end position="525"/>
    </location>
</feature>
<feature type="region of interest" description="Disordered" evidence="2">
    <location>
        <begin position="567"/>
        <end position="591"/>
    </location>
</feature>
<feature type="region of interest" description="Disordered" evidence="2">
    <location>
        <begin position="683"/>
        <end position="815"/>
    </location>
</feature>
<feature type="region of interest" description="Disordered" evidence="2">
    <location>
        <begin position="947"/>
        <end position="986"/>
    </location>
</feature>
<feature type="region of interest" description="Disordered" evidence="2">
    <location>
        <begin position="1146"/>
        <end position="1165"/>
    </location>
</feature>
<feature type="coiled-coil region" evidence="1">
    <location>
        <begin position="834"/>
        <end position="882"/>
    </location>
</feature>
<feature type="compositionally biased region" description="Polar residues" evidence="2">
    <location>
        <begin position="110"/>
        <end position="158"/>
    </location>
</feature>
<feature type="compositionally biased region" description="Polar residues" evidence="2">
    <location>
        <begin position="190"/>
        <end position="207"/>
    </location>
</feature>
<feature type="compositionally biased region" description="Polar residues" evidence="2">
    <location>
        <begin position="241"/>
        <end position="257"/>
    </location>
</feature>
<feature type="compositionally biased region" description="Low complexity" evidence="2">
    <location>
        <begin position="258"/>
        <end position="270"/>
    </location>
</feature>
<feature type="compositionally biased region" description="Polar residues" evidence="2">
    <location>
        <begin position="271"/>
        <end position="299"/>
    </location>
</feature>
<feature type="compositionally biased region" description="Low complexity" evidence="2">
    <location>
        <begin position="300"/>
        <end position="314"/>
    </location>
</feature>
<feature type="compositionally biased region" description="Polar residues" evidence="2">
    <location>
        <begin position="315"/>
        <end position="328"/>
    </location>
</feature>
<feature type="compositionally biased region" description="Low complexity" evidence="2">
    <location>
        <begin position="329"/>
        <end position="362"/>
    </location>
</feature>
<feature type="compositionally biased region" description="Polar residues" evidence="2">
    <location>
        <begin position="363"/>
        <end position="374"/>
    </location>
</feature>
<feature type="compositionally biased region" description="Low complexity" evidence="2">
    <location>
        <begin position="401"/>
        <end position="436"/>
    </location>
</feature>
<feature type="compositionally biased region" description="Polar residues" evidence="2">
    <location>
        <begin position="437"/>
        <end position="448"/>
    </location>
</feature>
<feature type="compositionally biased region" description="Low complexity" evidence="2">
    <location>
        <begin position="498"/>
        <end position="525"/>
    </location>
</feature>
<feature type="compositionally biased region" description="Polar residues" evidence="2">
    <location>
        <begin position="567"/>
        <end position="588"/>
    </location>
</feature>
<feature type="compositionally biased region" description="Low complexity" evidence="2">
    <location>
        <begin position="688"/>
        <end position="712"/>
    </location>
</feature>
<feature type="compositionally biased region" description="Polar residues" evidence="2">
    <location>
        <begin position="716"/>
        <end position="728"/>
    </location>
</feature>
<feature type="compositionally biased region" description="Polar residues" evidence="2">
    <location>
        <begin position="735"/>
        <end position="749"/>
    </location>
</feature>
<feature type="compositionally biased region" description="Polar residues" evidence="2">
    <location>
        <begin position="756"/>
        <end position="815"/>
    </location>
</feature>
<feature type="compositionally biased region" description="Low complexity" evidence="2">
    <location>
        <begin position="957"/>
        <end position="973"/>
    </location>
</feature>
<feature type="compositionally biased region" description="Polar residues" evidence="2">
    <location>
        <begin position="1148"/>
        <end position="1160"/>
    </location>
</feature>
<reference key="1">
    <citation type="journal article" date="2000" name="Nature">
        <title>Sequence and analysis of chromosome 1 of the plant Arabidopsis thaliana.</title>
        <authorList>
            <person name="Theologis A."/>
            <person name="Ecker J.R."/>
            <person name="Palm C.J."/>
            <person name="Federspiel N.A."/>
            <person name="Kaul S."/>
            <person name="White O."/>
            <person name="Alonso J."/>
            <person name="Altafi H."/>
            <person name="Araujo R."/>
            <person name="Bowman C.L."/>
            <person name="Brooks S.Y."/>
            <person name="Buehler E."/>
            <person name="Chan A."/>
            <person name="Chao Q."/>
            <person name="Chen H."/>
            <person name="Cheuk R.F."/>
            <person name="Chin C.W."/>
            <person name="Chung M.K."/>
            <person name="Conn L."/>
            <person name="Conway A.B."/>
            <person name="Conway A.R."/>
            <person name="Creasy T.H."/>
            <person name="Dewar K."/>
            <person name="Dunn P."/>
            <person name="Etgu P."/>
            <person name="Feldblyum T.V."/>
            <person name="Feng J.-D."/>
            <person name="Fong B."/>
            <person name="Fujii C.Y."/>
            <person name="Gill J.E."/>
            <person name="Goldsmith A.D."/>
            <person name="Haas B."/>
            <person name="Hansen N.F."/>
            <person name="Hughes B."/>
            <person name="Huizar L."/>
            <person name="Hunter J.L."/>
            <person name="Jenkins J."/>
            <person name="Johnson-Hopson C."/>
            <person name="Khan S."/>
            <person name="Khaykin E."/>
            <person name="Kim C.J."/>
            <person name="Koo H.L."/>
            <person name="Kremenetskaia I."/>
            <person name="Kurtz D.B."/>
            <person name="Kwan A."/>
            <person name="Lam B."/>
            <person name="Langin-Hooper S."/>
            <person name="Lee A."/>
            <person name="Lee J.M."/>
            <person name="Lenz C.A."/>
            <person name="Li J.H."/>
            <person name="Li Y.-P."/>
            <person name="Lin X."/>
            <person name="Liu S.X."/>
            <person name="Liu Z.A."/>
            <person name="Luros J.S."/>
            <person name="Maiti R."/>
            <person name="Marziali A."/>
            <person name="Militscher J."/>
            <person name="Miranda M."/>
            <person name="Nguyen M."/>
            <person name="Nierman W.C."/>
            <person name="Osborne B.I."/>
            <person name="Pai G."/>
            <person name="Peterson J."/>
            <person name="Pham P.K."/>
            <person name="Rizzo M."/>
            <person name="Rooney T."/>
            <person name="Rowley D."/>
            <person name="Sakano H."/>
            <person name="Salzberg S.L."/>
            <person name="Schwartz J.R."/>
            <person name="Shinn P."/>
            <person name="Southwick A.M."/>
            <person name="Sun H."/>
            <person name="Tallon L.J."/>
            <person name="Tambunga G."/>
            <person name="Toriumi M.J."/>
            <person name="Town C.D."/>
            <person name="Utterback T."/>
            <person name="Van Aken S."/>
            <person name="Vaysberg M."/>
            <person name="Vysotskaia V.S."/>
            <person name="Walker M."/>
            <person name="Wu D."/>
            <person name="Yu G."/>
            <person name="Fraser C.M."/>
            <person name="Venter J.C."/>
            <person name="Davis R.W."/>
        </authorList>
    </citation>
    <scope>NUCLEOTIDE SEQUENCE [LARGE SCALE GENOMIC DNA]</scope>
    <source>
        <strain>cv. Columbia</strain>
    </source>
</reference>
<reference key="2">
    <citation type="journal article" date="2017" name="Plant J.">
        <title>Araport11: a complete reannotation of the Arabidopsis thaliana reference genome.</title>
        <authorList>
            <person name="Cheng C.Y."/>
            <person name="Krishnakumar V."/>
            <person name="Chan A.P."/>
            <person name="Thibaud-Nissen F."/>
            <person name="Schobel S."/>
            <person name="Town C.D."/>
        </authorList>
    </citation>
    <scope>GENOME REANNOTATION</scope>
    <source>
        <strain>cv. Columbia</strain>
    </source>
</reference>
<reference key="3">
    <citation type="submission" date="2005-03" db="EMBL/GenBank/DDBJ databases">
        <title>Large-scale analysis of RIKEN Arabidopsis full-length (RAFL) cDNAs.</title>
        <authorList>
            <person name="Totoki Y."/>
            <person name="Seki M."/>
            <person name="Ishida J."/>
            <person name="Nakajima M."/>
            <person name="Enju A."/>
            <person name="Kamiya A."/>
            <person name="Narusaka M."/>
            <person name="Shin-i T."/>
            <person name="Nakagawa M."/>
            <person name="Sakamoto N."/>
            <person name="Oishi K."/>
            <person name="Kohara Y."/>
            <person name="Kobayashi M."/>
            <person name="Toyoda A."/>
            <person name="Sakaki Y."/>
            <person name="Sakurai T."/>
            <person name="Iida K."/>
            <person name="Akiyama K."/>
            <person name="Satou M."/>
            <person name="Toyoda T."/>
            <person name="Konagaya A."/>
            <person name="Carninci P."/>
            <person name="Kawai J."/>
            <person name="Hayashizaki Y."/>
            <person name="Shinozaki K."/>
        </authorList>
    </citation>
    <scope>NUCLEOTIDE SEQUENCE [LARGE SCALE MRNA] OF 1086-1335</scope>
    <source>
        <strain>cv. Columbia</strain>
    </source>
</reference>
<reference key="4">
    <citation type="journal article" date="2007" name="Mol. Cell">
        <title>Purification of a plant mediator from Arabidopsis thaliana identifies PFT1 as the Med25 subunit.</title>
        <authorList>
            <person name="Baeckstroem S."/>
            <person name="Elfving N."/>
            <person name="Nilsson R."/>
            <person name="Wingsle G."/>
            <person name="Bjoerklund S."/>
        </authorList>
    </citation>
    <scope>IDENTIFICATION BY MASS SPECTROMETRY</scope>
    <scope>SUBUNIT</scope>
    <scope>NOMENCLATURE</scope>
</reference>
<reference key="5">
    <citation type="journal article" date="2011" name="Plant Physiol.">
        <title>The Mediator complex in plants: structure, phylogeny, and expression profiling of representative genes in a dicot (Arabidopsis) and a monocot (rice) during reproduction and abiotic stress.</title>
        <authorList>
            <person name="Mathur S."/>
            <person name="Vyas S."/>
            <person name="Kapoor S."/>
            <person name="Tyagi A.K."/>
        </authorList>
    </citation>
    <scope>IDENTIFICATION</scope>
    <scope>NOMENCLATURE</scope>
</reference>
<proteinExistence type="evidence at protein level"/>
<keyword id="KW-0175">Coiled coil</keyword>
<keyword id="KW-0539">Nucleus</keyword>
<keyword id="KW-1185">Reference proteome</keyword>
<keyword id="KW-0804">Transcription</keyword>
<keyword id="KW-0805">Transcription regulation</keyword>
<organism>
    <name type="scientific">Arabidopsis thaliana</name>
    <name type="common">Mouse-ear cress</name>
    <dbReference type="NCBI Taxonomy" id="3702"/>
    <lineage>
        <taxon>Eukaryota</taxon>
        <taxon>Viridiplantae</taxon>
        <taxon>Streptophyta</taxon>
        <taxon>Embryophyta</taxon>
        <taxon>Tracheophyta</taxon>
        <taxon>Spermatophyta</taxon>
        <taxon>Magnoliopsida</taxon>
        <taxon>eudicotyledons</taxon>
        <taxon>Gunneridae</taxon>
        <taxon>Pentapetalae</taxon>
        <taxon>rosids</taxon>
        <taxon>malvids</taxon>
        <taxon>Brassicales</taxon>
        <taxon>Brassicaceae</taxon>
        <taxon>Camelineae</taxon>
        <taxon>Arabidopsis</taxon>
    </lineage>
</organism>
<comment type="function">
    <text>Component of the Mediator complex, a coactivator involved in the regulated transcription of nearly all RNA polymerase II-dependent genes. Mediator functions as a bridge to convey information from gene-specific regulatory proteins to the basal RNA polymerase II transcription machinery. The Mediator complex, having a compact conformation in its free form, is recruited to promoters by direct interactions with regulatory proteins and serves for the assembly of a functional preinitiation complex with RNA polymerase II and the general transcription factors.</text>
</comment>
<comment type="subunit">
    <text evidence="3">Component of the Mediator complex.</text>
</comment>
<comment type="interaction">
    <interactant intactId="EBI-21254477">
        <id>F4I171</id>
    </interactant>
    <interactant intactId="EBI-15195839">
        <id>Q7XHI5</id>
        <label>BHLH133</label>
    </interactant>
    <organismsDiffer>false</organismsDiffer>
    <experiments>3</experiments>
</comment>
<comment type="interaction">
    <interactant intactId="EBI-21254477">
        <id>F4I171</id>
    </interactant>
    <interactant intactId="EBI-15198077">
        <id>Q6R0A6</id>
        <label>MYB63</label>
    </interactant>
    <organismsDiffer>false</organismsDiffer>
    <experiments>3</experiments>
</comment>
<comment type="subcellular location">
    <subcellularLocation>
        <location evidence="4">Nucleus</location>
    </subcellularLocation>
</comment>
<comment type="similarity">
    <text evidence="4">Belongs to the plant Mediator complex subunit 15 family.</text>
</comment>
<comment type="sequence caution" evidence="4">
    <conflict type="erroneous gene model prediction">
        <sequence resource="EMBL-CDS" id="AAF82148"/>
    </conflict>
</comment>
<comment type="sequence caution" evidence="4">
    <conflict type="erroneous initiation">
        <sequence resource="EMBL-CDS" id="BAD94404"/>
    </conflict>
    <text>Truncated N-terminus.</text>
</comment>
<dbReference type="EMBL" id="AC034256">
    <property type="protein sequence ID" value="AAF82148.1"/>
    <property type="status" value="ALT_SEQ"/>
    <property type="molecule type" value="Genomic_DNA"/>
</dbReference>
<dbReference type="EMBL" id="CP002684">
    <property type="protein sequence ID" value="AEE29364.1"/>
    <property type="molecule type" value="Genomic_DNA"/>
</dbReference>
<dbReference type="EMBL" id="AK221945">
    <property type="protein sequence ID" value="BAD94404.1"/>
    <property type="status" value="ALT_INIT"/>
    <property type="molecule type" value="mRNA"/>
</dbReference>
<dbReference type="PIR" id="B86292">
    <property type="entry name" value="B86292"/>
</dbReference>
<dbReference type="RefSeq" id="NP_173030.1">
    <property type="nucleotide sequence ID" value="NM_101446.4"/>
</dbReference>
<dbReference type="SMR" id="F4I171"/>
<dbReference type="BioGRID" id="23387">
    <property type="interactions" value="4"/>
</dbReference>
<dbReference type="FunCoup" id="F4I171">
    <property type="interactions" value="1668"/>
</dbReference>
<dbReference type="IntAct" id="F4I171">
    <property type="interactions" value="46"/>
</dbReference>
<dbReference type="STRING" id="3702.F4I171"/>
<dbReference type="iPTMnet" id="F4I171"/>
<dbReference type="PaxDb" id="3702-AT1G15780.1"/>
<dbReference type="EnsemblPlants" id="AT1G15780.1">
    <property type="protein sequence ID" value="AT1G15780.1"/>
    <property type="gene ID" value="AT1G15780"/>
</dbReference>
<dbReference type="GeneID" id="838147"/>
<dbReference type="Gramene" id="AT1G15780.1">
    <property type="protein sequence ID" value="AT1G15780.1"/>
    <property type="gene ID" value="AT1G15780"/>
</dbReference>
<dbReference type="KEGG" id="ath:AT1G15780"/>
<dbReference type="Araport" id="AT1G15780"/>
<dbReference type="TAIR" id="AT1G15780">
    <property type="gene designation" value="NRB4"/>
</dbReference>
<dbReference type="eggNOG" id="ENOG502QQV3">
    <property type="taxonomic scope" value="Eukaryota"/>
</dbReference>
<dbReference type="HOGENOM" id="CLU_003310_0_0_1"/>
<dbReference type="InParanoid" id="F4I171"/>
<dbReference type="PRO" id="PR:F4I171"/>
<dbReference type="Proteomes" id="UP000006548">
    <property type="component" value="Chromosome 1"/>
</dbReference>
<dbReference type="ExpressionAtlas" id="F4I171">
    <property type="expression patterns" value="baseline and differential"/>
</dbReference>
<dbReference type="GO" id="GO:0016592">
    <property type="term" value="C:mediator complex"/>
    <property type="evidence" value="ECO:0000314"/>
    <property type="project" value="UniProtKB"/>
</dbReference>
<dbReference type="GO" id="GO:0005634">
    <property type="term" value="C:nucleus"/>
    <property type="evidence" value="ECO:0000314"/>
    <property type="project" value="TAIR"/>
</dbReference>
<dbReference type="GO" id="GO:0031490">
    <property type="term" value="F:chromatin DNA binding"/>
    <property type="evidence" value="ECO:0000314"/>
    <property type="project" value="TAIR"/>
</dbReference>
<dbReference type="GO" id="GO:0003713">
    <property type="term" value="F:transcription coactivator activity"/>
    <property type="evidence" value="ECO:0000314"/>
    <property type="project" value="TAIR"/>
</dbReference>
<dbReference type="GO" id="GO:0045723">
    <property type="term" value="P:positive regulation of fatty acid biosynthetic process"/>
    <property type="evidence" value="ECO:0000315"/>
    <property type="project" value="TAIR"/>
</dbReference>
<dbReference type="GO" id="GO:0009751">
    <property type="term" value="P:response to salicylic acid"/>
    <property type="evidence" value="ECO:0000315"/>
    <property type="project" value="TAIR"/>
</dbReference>
<dbReference type="FunFam" id="1.10.246.20:FF:000003">
    <property type="entry name" value="Mediator of RNA polymerase II transcription subunit 15a"/>
    <property type="match status" value="1"/>
</dbReference>
<dbReference type="Gene3D" id="1.10.246.20">
    <property type="entry name" value="Coactivator CBP, KIX domain"/>
    <property type="match status" value="1"/>
</dbReference>
<dbReference type="InterPro" id="IPR036529">
    <property type="entry name" value="KIX_dom_sf"/>
</dbReference>
<dbReference type="InterPro" id="IPR048386">
    <property type="entry name" value="Med15_C"/>
</dbReference>
<dbReference type="InterPro" id="IPR036546">
    <property type="entry name" value="MED15_KIX"/>
</dbReference>
<dbReference type="InterPro" id="IPR044661">
    <property type="entry name" value="MED15a/b/c-like"/>
</dbReference>
<dbReference type="PANTHER" id="PTHR33137">
    <property type="entry name" value="MEDIATOR OF RNA POLYMERASE II TRANSCRIPTION SUBUNIT 15A-RELATED"/>
    <property type="match status" value="1"/>
</dbReference>
<dbReference type="PANTHER" id="PTHR33137:SF4">
    <property type="entry name" value="MEDIATOR OF RNA POLYMERASE II TRANSCRIPTION SUBUNIT 15A-RELATED"/>
    <property type="match status" value="1"/>
</dbReference>
<dbReference type="Pfam" id="PF16987">
    <property type="entry name" value="KIX_2"/>
    <property type="match status" value="1"/>
</dbReference>
<dbReference type="Pfam" id="PF21539">
    <property type="entry name" value="Med15_C"/>
    <property type="match status" value="1"/>
</dbReference>
<accession>F4I171</accession>
<accession>Q56WT7</accession>
<accession>Q9LMQ6</accession>
<sequence length="1335" mass="146345">MDNNNWRPSLPNGEPAMDTGDWRTQLPPDSRQKIVNKIMETLKKHLPFSGPEGINELRRIAARFEEKIFSGALNQTDYLRKISMKMLTMETKSQNAAGSSAAIPAANNGTSIDSIPTNQGQLLPGSLSTNQSQAPQPLLSQTMQNNTASGMTGSTALPSSMPPVSSITNNNTTSVVNQNANMQNVAGMLQDSSGQHGLSSNMFSGPQRQMLGRPHAMSSQQQQQPYLYQQQLQQQLLKQNFQSGNVPNPNSLLPSHIQQQQQNVLQPNQLHSSQQPGVPTSATQPSTVNSAPLQGLHTNQQSSPQLSSQQTTQSMLRQHQSSMLRQHPQSQQASGIHQQQSSLPQQSISPLQQQPTQLMRQQAANSSGIQQKQMMGQHVVGDMQQQHQQRLLNQQNNVMNIQQQQSQQQPLQQPQQQQKQQPPAQQQLMSQQNSLQATHQNPLGTQSNVAGLQQPQQQMLNSQVGNSSLQNNQHSVHMLSQPTVGLQRTHQAGHGLYSSQGQQSQNQPSQQQMMPQLQSHHQQLGLQQQPNLLQQDVQQRLQASGQVTGSLLPPQNVVDQQRQLYQSQRTLPEMPSSSLDSTAQTESANGGDWQEEVYQKIKSMKETYLPDLNEIYQRVAAKLQQDSMPQQQRSDQLEKLRQFKTMLERMIQFLSVSKSNIMPALKDKVAYYEKQIIGFLNMHRPRKPVQQGQLPQSQMQPMQQPQSQTVQDQSHDNQTNPQMQSMSMQGAGPRAQQSSMTNMQSNVLSSRPGVSAPQQNIPSSIPASSLESGQGNTLNNGQQVAMGSMQQNTSQLVNNSSASAQSGLSTLQSNVNQPQLSSSLLQHQHLKQQQDQQMQLKQQFQQRQMQQQQLQARQQQQQQQLQARQQAAQLQQMNDMNDLTSRQGMNVSRGMFQQHSMQGQRANYPLQQLKPGAVSSPQLLQGASPQMSQHLSPQVDQKNTVNKMGTPLQPANSPFVVPSPSSTPLAPSPMQVDSEKPGSSSLSMGNIARQQATGMQGVVQSLAIGTPGISASPLLQEFTSPDGNILNSSTITSGKPSATELPIERLIRAVKSISPQALSSAVSDIGSVVSMVDRIAGSAPGNGSRASVGEDLVAMTKCRLQARNFMTQEGMMATKKMKRHTTAMPLSVASLGGSVGDNYKQFAGSETSDLESTATSDGKKARTETEHALLEEIKEINQRLIDTVVEISDDEDAADPSEVAISSIGCEGTTVRFSFIAVSLSPALKAHLSSTQMSPIQPLRLLVPCSYPNGSPSLLDKLPVETSKENEDLSSKAMARFNILLRSLSQPMSLKDIAKTWDACARAVICEYAQQFGGGTFSSKYGTWEKYVAAS</sequence>